<accession>B7M5W6</accession>
<sequence>MDYTLTRIDPNGENDRYPLQKQEIVTDPLEQEVNKNVFMGKLNDMVNWGRKNSIWPYNFGLSCCYVEMVTSFTAVHDVARFGAEVLRASPRQADLMVVAGTCFTKMAPVIQRLYDQMLEPKWVISMGACANSGGMYDIYSVVQGVDKFIPVDVYIPGCPPRPEAYMQALMLLQESIGKERRPLSWVVGDQGVYRANMQSERERKRGERIAVTNLRTPDEI</sequence>
<feature type="chain" id="PRO_0000376220" description="NADH-quinone oxidoreductase subunit B">
    <location>
        <begin position="1"/>
        <end position="220"/>
    </location>
</feature>
<feature type="binding site" evidence="1">
    <location>
        <position position="63"/>
    </location>
    <ligand>
        <name>[4Fe-4S] cluster</name>
        <dbReference type="ChEBI" id="CHEBI:49883"/>
    </ligand>
</feature>
<feature type="binding site" evidence="1">
    <location>
        <position position="64"/>
    </location>
    <ligand>
        <name>[4Fe-4S] cluster</name>
        <dbReference type="ChEBI" id="CHEBI:49883"/>
    </ligand>
</feature>
<feature type="binding site" evidence="1">
    <location>
        <position position="129"/>
    </location>
    <ligand>
        <name>[4Fe-4S] cluster</name>
        <dbReference type="ChEBI" id="CHEBI:49883"/>
    </ligand>
</feature>
<feature type="binding site" evidence="1">
    <location>
        <position position="158"/>
    </location>
    <ligand>
        <name>[4Fe-4S] cluster</name>
        <dbReference type="ChEBI" id="CHEBI:49883"/>
    </ligand>
</feature>
<evidence type="ECO:0000255" key="1">
    <source>
        <dbReference type="HAMAP-Rule" id="MF_01356"/>
    </source>
</evidence>
<dbReference type="EC" id="7.1.1.-" evidence="1"/>
<dbReference type="EMBL" id="CU928160">
    <property type="protein sequence ID" value="CAQ99203.1"/>
    <property type="molecule type" value="Genomic_DNA"/>
</dbReference>
<dbReference type="RefSeq" id="WP_000386733.1">
    <property type="nucleotide sequence ID" value="NC_011741.1"/>
</dbReference>
<dbReference type="SMR" id="B7M5W6"/>
<dbReference type="GeneID" id="93774887"/>
<dbReference type="KEGG" id="ecr:ECIAI1_2361"/>
<dbReference type="HOGENOM" id="CLU_055737_7_3_6"/>
<dbReference type="GO" id="GO:0005886">
    <property type="term" value="C:plasma membrane"/>
    <property type="evidence" value="ECO:0007669"/>
    <property type="project" value="UniProtKB-SubCell"/>
</dbReference>
<dbReference type="GO" id="GO:0045271">
    <property type="term" value="C:respiratory chain complex I"/>
    <property type="evidence" value="ECO:0007669"/>
    <property type="project" value="TreeGrafter"/>
</dbReference>
<dbReference type="GO" id="GO:0051539">
    <property type="term" value="F:4 iron, 4 sulfur cluster binding"/>
    <property type="evidence" value="ECO:0007669"/>
    <property type="project" value="UniProtKB-KW"/>
</dbReference>
<dbReference type="GO" id="GO:0005506">
    <property type="term" value="F:iron ion binding"/>
    <property type="evidence" value="ECO:0007669"/>
    <property type="project" value="UniProtKB-UniRule"/>
</dbReference>
<dbReference type="GO" id="GO:0008137">
    <property type="term" value="F:NADH dehydrogenase (ubiquinone) activity"/>
    <property type="evidence" value="ECO:0007669"/>
    <property type="project" value="InterPro"/>
</dbReference>
<dbReference type="GO" id="GO:0050136">
    <property type="term" value="F:NADH:ubiquinone reductase (non-electrogenic) activity"/>
    <property type="evidence" value="ECO:0007669"/>
    <property type="project" value="UniProtKB-UniRule"/>
</dbReference>
<dbReference type="GO" id="GO:0048038">
    <property type="term" value="F:quinone binding"/>
    <property type="evidence" value="ECO:0007669"/>
    <property type="project" value="UniProtKB-KW"/>
</dbReference>
<dbReference type="GO" id="GO:0009060">
    <property type="term" value="P:aerobic respiration"/>
    <property type="evidence" value="ECO:0007669"/>
    <property type="project" value="TreeGrafter"/>
</dbReference>
<dbReference type="GO" id="GO:0015990">
    <property type="term" value="P:electron transport coupled proton transport"/>
    <property type="evidence" value="ECO:0007669"/>
    <property type="project" value="TreeGrafter"/>
</dbReference>
<dbReference type="FunFam" id="3.40.50.12280:FF:000002">
    <property type="entry name" value="NADH-quinone oxidoreductase subunit B"/>
    <property type="match status" value="1"/>
</dbReference>
<dbReference type="Gene3D" id="3.40.50.12280">
    <property type="match status" value="1"/>
</dbReference>
<dbReference type="HAMAP" id="MF_01356">
    <property type="entry name" value="NDH1_NuoB"/>
    <property type="match status" value="1"/>
</dbReference>
<dbReference type="InterPro" id="IPR006137">
    <property type="entry name" value="NADH_UbQ_OxRdtase-like_20kDa"/>
</dbReference>
<dbReference type="InterPro" id="IPR006138">
    <property type="entry name" value="NADH_UQ_OxRdtase_20Kd_su"/>
</dbReference>
<dbReference type="NCBIfam" id="TIGR01957">
    <property type="entry name" value="nuoB_fam"/>
    <property type="match status" value="1"/>
</dbReference>
<dbReference type="NCBIfam" id="NF005012">
    <property type="entry name" value="PRK06411.1"/>
    <property type="match status" value="1"/>
</dbReference>
<dbReference type="PANTHER" id="PTHR11995">
    <property type="entry name" value="NADH DEHYDROGENASE"/>
    <property type="match status" value="1"/>
</dbReference>
<dbReference type="PANTHER" id="PTHR11995:SF14">
    <property type="entry name" value="NADH DEHYDROGENASE [UBIQUINONE] IRON-SULFUR PROTEIN 7, MITOCHONDRIAL"/>
    <property type="match status" value="1"/>
</dbReference>
<dbReference type="Pfam" id="PF01058">
    <property type="entry name" value="Oxidored_q6"/>
    <property type="match status" value="1"/>
</dbReference>
<dbReference type="SUPFAM" id="SSF56770">
    <property type="entry name" value="HydA/Nqo6-like"/>
    <property type="match status" value="1"/>
</dbReference>
<dbReference type="PROSITE" id="PS01150">
    <property type="entry name" value="COMPLEX1_20K"/>
    <property type="match status" value="1"/>
</dbReference>
<keyword id="KW-0004">4Fe-4S</keyword>
<keyword id="KW-0997">Cell inner membrane</keyword>
<keyword id="KW-1003">Cell membrane</keyword>
<keyword id="KW-0408">Iron</keyword>
<keyword id="KW-0411">Iron-sulfur</keyword>
<keyword id="KW-0472">Membrane</keyword>
<keyword id="KW-0479">Metal-binding</keyword>
<keyword id="KW-0520">NAD</keyword>
<keyword id="KW-0874">Quinone</keyword>
<keyword id="KW-1278">Translocase</keyword>
<keyword id="KW-0813">Transport</keyword>
<keyword id="KW-0830">Ubiquinone</keyword>
<reference key="1">
    <citation type="journal article" date="2009" name="PLoS Genet.">
        <title>Organised genome dynamics in the Escherichia coli species results in highly diverse adaptive paths.</title>
        <authorList>
            <person name="Touchon M."/>
            <person name="Hoede C."/>
            <person name="Tenaillon O."/>
            <person name="Barbe V."/>
            <person name="Baeriswyl S."/>
            <person name="Bidet P."/>
            <person name="Bingen E."/>
            <person name="Bonacorsi S."/>
            <person name="Bouchier C."/>
            <person name="Bouvet O."/>
            <person name="Calteau A."/>
            <person name="Chiapello H."/>
            <person name="Clermont O."/>
            <person name="Cruveiller S."/>
            <person name="Danchin A."/>
            <person name="Diard M."/>
            <person name="Dossat C."/>
            <person name="Karoui M.E."/>
            <person name="Frapy E."/>
            <person name="Garry L."/>
            <person name="Ghigo J.M."/>
            <person name="Gilles A.M."/>
            <person name="Johnson J."/>
            <person name="Le Bouguenec C."/>
            <person name="Lescat M."/>
            <person name="Mangenot S."/>
            <person name="Martinez-Jehanne V."/>
            <person name="Matic I."/>
            <person name="Nassif X."/>
            <person name="Oztas S."/>
            <person name="Petit M.A."/>
            <person name="Pichon C."/>
            <person name="Rouy Z."/>
            <person name="Ruf C.S."/>
            <person name="Schneider D."/>
            <person name="Tourret J."/>
            <person name="Vacherie B."/>
            <person name="Vallenet D."/>
            <person name="Medigue C."/>
            <person name="Rocha E.P.C."/>
            <person name="Denamur E."/>
        </authorList>
    </citation>
    <scope>NUCLEOTIDE SEQUENCE [LARGE SCALE GENOMIC DNA]</scope>
    <source>
        <strain>IAI1</strain>
    </source>
</reference>
<name>NUOB_ECO8A</name>
<protein>
    <recommendedName>
        <fullName evidence="1">NADH-quinone oxidoreductase subunit B</fullName>
        <ecNumber evidence="1">7.1.1.-</ecNumber>
    </recommendedName>
    <alternativeName>
        <fullName evidence="1">NADH dehydrogenase I subunit B</fullName>
    </alternativeName>
    <alternativeName>
        <fullName evidence="1">NDH-1 subunit B</fullName>
    </alternativeName>
</protein>
<organism>
    <name type="scientific">Escherichia coli O8 (strain IAI1)</name>
    <dbReference type="NCBI Taxonomy" id="585034"/>
    <lineage>
        <taxon>Bacteria</taxon>
        <taxon>Pseudomonadati</taxon>
        <taxon>Pseudomonadota</taxon>
        <taxon>Gammaproteobacteria</taxon>
        <taxon>Enterobacterales</taxon>
        <taxon>Enterobacteriaceae</taxon>
        <taxon>Escherichia</taxon>
    </lineage>
</organism>
<gene>
    <name evidence="1" type="primary">nuoB</name>
    <name type="ordered locus">ECIAI1_2361</name>
</gene>
<comment type="function">
    <text evidence="1">NDH-1 shuttles electrons from NADH, via FMN and iron-sulfur (Fe-S) centers, to quinones in the respiratory chain. The immediate electron acceptor for the enzyme in this species is believed to be ubiquinone. Couples the redox reaction to proton translocation (for every two electrons transferred, four hydrogen ions are translocated across the cytoplasmic membrane), and thus conserves the redox energy in a proton gradient.</text>
</comment>
<comment type="catalytic activity">
    <reaction evidence="1">
        <text>a quinone + NADH + 5 H(+)(in) = a quinol + NAD(+) + 4 H(+)(out)</text>
        <dbReference type="Rhea" id="RHEA:57888"/>
        <dbReference type="ChEBI" id="CHEBI:15378"/>
        <dbReference type="ChEBI" id="CHEBI:24646"/>
        <dbReference type="ChEBI" id="CHEBI:57540"/>
        <dbReference type="ChEBI" id="CHEBI:57945"/>
        <dbReference type="ChEBI" id="CHEBI:132124"/>
    </reaction>
</comment>
<comment type="cofactor">
    <cofactor evidence="1">
        <name>[4Fe-4S] cluster</name>
        <dbReference type="ChEBI" id="CHEBI:49883"/>
    </cofactor>
    <text evidence="1">Binds 1 [4Fe-4S] cluster.</text>
</comment>
<comment type="subunit">
    <text evidence="1">NDH-1 is composed of 13 different subunits. Subunits NuoB, CD, E, F, and G constitute the peripheral sector of the complex.</text>
</comment>
<comment type="subcellular location">
    <subcellularLocation>
        <location evidence="1">Cell inner membrane</location>
        <topology evidence="1">Peripheral membrane protein</topology>
        <orientation evidence="1">Cytoplasmic side</orientation>
    </subcellularLocation>
</comment>
<comment type="similarity">
    <text evidence="1">Belongs to the complex I 20 kDa subunit family.</text>
</comment>
<proteinExistence type="inferred from homology"/>